<proteinExistence type="inferred from homology"/>
<name>RL25_DEHMB</name>
<accession>A5FPN6</accession>
<keyword id="KW-0687">Ribonucleoprotein</keyword>
<keyword id="KW-0689">Ribosomal protein</keyword>
<keyword id="KW-0694">RNA-binding</keyword>
<keyword id="KW-0699">rRNA-binding</keyword>
<sequence length="218" mass="24286">MTGISLALKPRQVFGNKNKLIRAQGLTPVHIFGHGLKSLALQADTLELESTINRAGSSHLVNIKLDTDKKTRKVFIREIQRNPIKGYLEHVDFYQINLKEKVTAEIPIHFSGESSLLKEKGHKLIAPFTHLTVEALPDDLPPEIHIDLSQFDTLEKDLYIKDIILPGGAKILNEADLLVAKVSEVHLKVETTVAVNPAEESGEKPVAHIEEKESTEKE</sequence>
<reference key="1">
    <citation type="submission" date="2007-05" db="EMBL/GenBank/DDBJ databases">
        <title>Complete sequence of Dehalococcoides sp. BAV1.</title>
        <authorList>
            <consortium name="US DOE Joint Genome Institute"/>
            <person name="Copeland A."/>
            <person name="Lucas S."/>
            <person name="Lapidus A."/>
            <person name="Barry K."/>
            <person name="Detter J.C."/>
            <person name="Glavina del Rio T."/>
            <person name="Hammon N."/>
            <person name="Israni S."/>
            <person name="Pitluck S."/>
            <person name="Lowry S."/>
            <person name="Clum A."/>
            <person name="Schmutz J."/>
            <person name="Larimer F."/>
            <person name="Land M."/>
            <person name="Hauser L."/>
            <person name="Kyrpides N."/>
            <person name="Kim E."/>
            <person name="Ritalahti K.M."/>
            <person name="Loeffler F."/>
            <person name="Richardson P."/>
        </authorList>
    </citation>
    <scope>NUCLEOTIDE SEQUENCE [LARGE SCALE GENOMIC DNA]</scope>
    <source>
        <strain>ATCC BAA-2100 / JCM 16839 / KCTC 5957 / BAV1</strain>
    </source>
</reference>
<feature type="chain" id="PRO_1000086624" description="Large ribosomal subunit protein bL25">
    <location>
        <begin position="1"/>
        <end position="218"/>
    </location>
</feature>
<feature type="region of interest" description="Disordered" evidence="2">
    <location>
        <begin position="197"/>
        <end position="218"/>
    </location>
</feature>
<feature type="compositionally biased region" description="Basic and acidic residues" evidence="2">
    <location>
        <begin position="201"/>
        <end position="218"/>
    </location>
</feature>
<comment type="function">
    <text evidence="1">This is one of the proteins that binds to the 5S RNA in the ribosome where it forms part of the central protuberance.</text>
</comment>
<comment type="subunit">
    <text evidence="1">Part of the 50S ribosomal subunit; part of the 5S rRNA/L5/L18/L25 subcomplex. Contacts the 5S rRNA. Binds to the 5S rRNA independently of L5 and L18.</text>
</comment>
<comment type="similarity">
    <text evidence="1">Belongs to the bacterial ribosomal protein bL25 family. CTC subfamily.</text>
</comment>
<protein>
    <recommendedName>
        <fullName evidence="1">Large ribosomal subunit protein bL25</fullName>
    </recommendedName>
    <alternativeName>
        <fullName evidence="3">50S ribosomal protein L25</fullName>
    </alternativeName>
    <alternativeName>
        <fullName evidence="1">General stress protein CTC</fullName>
    </alternativeName>
</protein>
<dbReference type="EMBL" id="CP000688">
    <property type="protein sequence ID" value="ABQ17834.1"/>
    <property type="molecule type" value="Genomic_DNA"/>
</dbReference>
<dbReference type="SMR" id="A5FPN6"/>
<dbReference type="KEGG" id="deb:DehaBAV1_1255"/>
<dbReference type="PATRIC" id="fig|216389.18.peg.1324"/>
<dbReference type="HOGENOM" id="CLU_075939_2_0_0"/>
<dbReference type="GO" id="GO:0022625">
    <property type="term" value="C:cytosolic large ribosomal subunit"/>
    <property type="evidence" value="ECO:0007669"/>
    <property type="project" value="TreeGrafter"/>
</dbReference>
<dbReference type="GO" id="GO:0008097">
    <property type="term" value="F:5S rRNA binding"/>
    <property type="evidence" value="ECO:0007669"/>
    <property type="project" value="InterPro"/>
</dbReference>
<dbReference type="GO" id="GO:0003735">
    <property type="term" value="F:structural constituent of ribosome"/>
    <property type="evidence" value="ECO:0007669"/>
    <property type="project" value="InterPro"/>
</dbReference>
<dbReference type="GO" id="GO:0006412">
    <property type="term" value="P:translation"/>
    <property type="evidence" value="ECO:0007669"/>
    <property type="project" value="UniProtKB-UniRule"/>
</dbReference>
<dbReference type="CDD" id="cd00495">
    <property type="entry name" value="Ribosomal_L25_TL5_CTC"/>
    <property type="match status" value="1"/>
</dbReference>
<dbReference type="Gene3D" id="2.170.120.20">
    <property type="entry name" value="Ribosomal protein L25, beta domain"/>
    <property type="match status" value="1"/>
</dbReference>
<dbReference type="Gene3D" id="2.40.240.10">
    <property type="entry name" value="Ribosomal Protein L25, Chain P"/>
    <property type="match status" value="1"/>
</dbReference>
<dbReference type="HAMAP" id="MF_01334">
    <property type="entry name" value="Ribosomal_bL25_CTC"/>
    <property type="match status" value="1"/>
</dbReference>
<dbReference type="InterPro" id="IPR020056">
    <property type="entry name" value="Rbsml_bL25/Gln-tRNA_synth_N"/>
</dbReference>
<dbReference type="InterPro" id="IPR011035">
    <property type="entry name" value="Ribosomal_bL25/Gln-tRNA_synth"/>
</dbReference>
<dbReference type="InterPro" id="IPR020057">
    <property type="entry name" value="Ribosomal_bL25_b-dom"/>
</dbReference>
<dbReference type="InterPro" id="IPR037121">
    <property type="entry name" value="Ribosomal_bL25_C"/>
</dbReference>
<dbReference type="InterPro" id="IPR001021">
    <property type="entry name" value="Ribosomal_bL25_long"/>
</dbReference>
<dbReference type="InterPro" id="IPR029751">
    <property type="entry name" value="Ribosomal_L25_dom"/>
</dbReference>
<dbReference type="InterPro" id="IPR020930">
    <property type="entry name" value="Ribosomal_uL5_bac-type"/>
</dbReference>
<dbReference type="NCBIfam" id="TIGR00731">
    <property type="entry name" value="bL25_bact_ctc"/>
    <property type="match status" value="1"/>
</dbReference>
<dbReference type="NCBIfam" id="NF004133">
    <property type="entry name" value="PRK05618.2-4"/>
    <property type="match status" value="1"/>
</dbReference>
<dbReference type="PANTHER" id="PTHR33284">
    <property type="entry name" value="RIBOSOMAL PROTEIN L25/GLN-TRNA SYNTHETASE, ANTI-CODON-BINDING DOMAIN-CONTAINING PROTEIN"/>
    <property type="match status" value="1"/>
</dbReference>
<dbReference type="PANTHER" id="PTHR33284:SF1">
    <property type="entry name" value="RIBOSOMAL PROTEIN L25_GLN-TRNA SYNTHETASE, ANTI-CODON-BINDING DOMAIN-CONTAINING PROTEIN"/>
    <property type="match status" value="1"/>
</dbReference>
<dbReference type="Pfam" id="PF01386">
    <property type="entry name" value="Ribosomal_L25p"/>
    <property type="match status" value="1"/>
</dbReference>
<dbReference type="Pfam" id="PF14693">
    <property type="entry name" value="Ribosomal_TL5_C"/>
    <property type="match status" value="1"/>
</dbReference>
<dbReference type="SUPFAM" id="SSF50715">
    <property type="entry name" value="Ribosomal protein L25-like"/>
    <property type="match status" value="1"/>
</dbReference>
<organism>
    <name type="scientific">Dehalococcoides mccartyi (strain ATCC BAA-2100 / JCM 16839 / KCTC 5957 / BAV1)</name>
    <dbReference type="NCBI Taxonomy" id="216389"/>
    <lineage>
        <taxon>Bacteria</taxon>
        <taxon>Bacillati</taxon>
        <taxon>Chloroflexota</taxon>
        <taxon>Dehalococcoidia</taxon>
        <taxon>Dehalococcoidales</taxon>
        <taxon>Dehalococcoidaceae</taxon>
        <taxon>Dehalococcoides</taxon>
    </lineage>
</organism>
<evidence type="ECO:0000255" key="1">
    <source>
        <dbReference type="HAMAP-Rule" id="MF_01334"/>
    </source>
</evidence>
<evidence type="ECO:0000256" key="2">
    <source>
        <dbReference type="SAM" id="MobiDB-lite"/>
    </source>
</evidence>
<evidence type="ECO:0000305" key="3"/>
<gene>
    <name evidence="1" type="primary">rplY</name>
    <name evidence="1" type="synonym">ctc</name>
    <name type="ordered locus">DehaBAV1_1255</name>
</gene>